<proteinExistence type="inferred from homology"/>
<accession>A5IM64</accession>
<protein>
    <recommendedName>
        <fullName evidence="1">2,3,4,5-tetrahydropyridine-2,6-dicarboxylate N-acetyltransferase</fullName>
        <ecNumber evidence="1">2.3.1.89</ecNumber>
    </recommendedName>
    <alternativeName>
        <fullName evidence="1">Tetrahydrodipicolinate N-acetyltransferase</fullName>
        <shortName evidence="1">THP acetyltransferase</shortName>
        <shortName evidence="1">Tetrahydropicolinate acetylase</shortName>
    </alternativeName>
</protein>
<name>DAPH_THEP1</name>
<organism>
    <name type="scientific">Thermotoga petrophila (strain ATCC BAA-488 / DSM 13995 / JCM 10881 / RKU-1)</name>
    <dbReference type="NCBI Taxonomy" id="390874"/>
    <lineage>
        <taxon>Bacteria</taxon>
        <taxon>Thermotogati</taxon>
        <taxon>Thermotogota</taxon>
        <taxon>Thermotogae</taxon>
        <taxon>Thermotogales</taxon>
        <taxon>Thermotogaceae</taxon>
        <taxon>Thermotoga</taxon>
    </lineage>
</organism>
<comment type="function">
    <text evidence="1">Catalyzes the transfer of an acetyl group from acetyl-CoA to tetrahydrodipicolinate.</text>
</comment>
<comment type="catalytic activity">
    <reaction evidence="1">
        <text>(S)-2,3,4,5-tetrahydrodipicolinate + acetyl-CoA + H2O = L-2-acetamido-6-oxoheptanedioate + CoA</text>
        <dbReference type="Rhea" id="RHEA:13085"/>
        <dbReference type="ChEBI" id="CHEBI:15377"/>
        <dbReference type="ChEBI" id="CHEBI:16845"/>
        <dbReference type="ChEBI" id="CHEBI:57287"/>
        <dbReference type="ChEBI" id="CHEBI:57288"/>
        <dbReference type="ChEBI" id="CHEBI:58117"/>
        <dbReference type="EC" id="2.3.1.89"/>
    </reaction>
</comment>
<comment type="pathway">
    <text evidence="1">Amino-acid biosynthesis; L-lysine biosynthesis via DAP pathway; LL-2,6-diaminopimelate from (S)-tetrahydrodipicolinate (acetylase route): step 1/3.</text>
</comment>
<comment type="similarity">
    <text evidence="1">Belongs to the transferase hexapeptide repeat family. DapH subfamily.</text>
</comment>
<keyword id="KW-0012">Acyltransferase</keyword>
<keyword id="KW-0028">Amino-acid biosynthesis</keyword>
<keyword id="KW-0220">Diaminopimelate biosynthesis</keyword>
<keyword id="KW-0457">Lysine biosynthesis</keyword>
<keyword id="KW-0677">Repeat</keyword>
<keyword id="KW-0808">Transferase</keyword>
<evidence type="ECO:0000255" key="1">
    <source>
        <dbReference type="HAMAP-Rule" id="MF_01691"/>
    </source>
</evidence>
<reference key="1">
    <citation type="submission" date="2007-05" db="EMBL/GenBank/DDBJ databases">
        <title>Complete sequence of Thermotoga petrophila RKU-1.</title>
        <authorList>
            <consortium name="US DOE Joint Genome Institute"/>
            <person name="Copeland A."/>
            <person name="Lucas S."/>
            <person name="Lapidus A."/>
            <person name="Barry K."/>
            <person name="Glavina del Rio T."/>
            <person name="Dalin E."/>
            <person name="Tice H."/>
            <person name="Pitluck S."/>
            <person name="Sims D."/>
            <person name="Brettin T."/>
            <person name="Bruce D."/>
            <person name="Detter J.C."/>
            <person name="Han C."/>
            <person name="Tapia R."/>
            <person name="Schmutz J."/>
            <person name="Larimer F."/>
            <person name="Land M."/>
            <person name="Hauser L."/>
            <person name="Kyrpides N."/>
            <person name="Mikhailova N."/>
            <person name="Nelson K."/>
            <person name="Gogarten J.P."/>
            <person name="Noll K."/>
            <person name="Richardson P."/>
        </authorList>
    </citation>
    <scope>NUCLEOTIDE SEQUENCE [LARGE SCALE GENOMIC DNA]</scope>
    <source>
        <strain>ATCC BAA-488 / DSM 13995 / JCM 10881 / RKU-1</strain>
    </source>
</reference>
<gene>
    <name evidence="1" type="primary">dapH</name>
    <name type="ordered locus">Tpet_1273</name>
</gene>
<dbReference type="EC" id="2.3.1.89" evidence="1"/>
<dbReference type="EMBL" id="CP000702">
    <property type="protein sequence ID" value="ABQ47287.1"/>
    <property type="molecule type" value="Genomic_DNA"/>
</dbReference>
<dbReference type="RefSeq" id="WP_011943768.1">
    <property type="nucleotide sequence ID" value="NC_009486.1"/>
</dbReference>
<dbReference type="SMR" id="A5IM64"/>
<dbReference type="STRING" id="390874.Tpet_1273"/>
<dbReference type="KEGG" id="tpt:Tpet_1273"/>
<dbReference type="eggNOG" id="COG2171">
    <property type="taxonomic scope" value="Bacteria"/>
</dbReference>
<dbReference type="HOGENOM" id="CLU_103751_0_0_0"/>
<dbReference type="UniPathway" id="UPA00034">
    <property type="reaction ID" value="UER00022"/>
</dbReference>
<dbReference type="Proteomes" id="UP000006558">
    <property type="component" value="Chromosome"/>
</dbReference>
<dbReference type="GO" id="GO:0047200">
    <property type="term" value="F:tetrahydrodipicolinate N-acetyltransferase activity"/>
    <property type="evidence" value="ECO:0007669"/>
    <property type="project" value="UniProtKB-EC"/>
</dbReference>
<dbReference type="GO" id="GO:0019877">
    <property type="term" value="P:diaminopimelate biosynthetic process"/>
    <property type="evidence" value="ECO:0007669"/>
    <property type="project" value="UniProtKB-UniRule"/>
</dbReference>
<dbReference type="GO" id="GO:0009089">
    <property type="term" value="P:lysine biosynthetic process via diaminopimelate"/>
    <property type="evidence" value="ECO:0007669"/>
    <property type="project" value="UniProtKB-UniRule"/>
</dbReference>
<dbReference type="CDD" id="cd03350">
    <property type="entry name" value="LbH_THP_succinylT"/>
    <property type="match status" value="1"/>
</dbReference>
<dbReference type="Gene3D" id="2.160.10.10">
    <property type="entry name" value="Hexapeptide repeat proteins"/>
    <property type="match status" value="1"/>
</dbReference>
<dbReference type="Gene3D" id="3.30.70.250">
    <property type="entry name" value="Malonyl-CoA ACP transacylase, ACP-binding"/>
    <property type="match status" value="1"/>
</dbReference>
<dbReference type="HAMAP" id="MF_01691">
    <property type="entry name" value="DapH"/>
    <property type="match status" value="1"/>
</dbReference>
<dbReference type="InterPro" id="IPR019873">
    <property type="entry name" value="DapH"/>
</dbReference>
<dbReference type="InterPro" id="IPR013710">
    <property type="entry name" value="DapH_N"/>
</dbReference>
<dbReference type="InterPro" id="IPR001451">
    <property type="entry name" value="Hexapep"/>
</dbReference>
<dbReference type="InterPro" id="IPR018357">
    <property type="entry name" value="Hexapep_transf_CS"/>
</dbReference>
<dbReference type="InterPro" id="IPR050179">
    <property type="entry name" value="Trans_hexapeptide_repeat"/>
</dbReference>
<dbReference type="InterPro" id="IPR011004">
    <property type="entry name" value="Trimer_LpxA-like_sf"/>
</dbReference>
<dbReference type="NCBIfam" id="TIGR03532">
    <property type="entry name" value="DapD_Ac"/>
    <property type="match status" value="1"/>
</dbReference>
<dbReference type="PANTHER" id="PTHR43300:SF10">
    <property type="entry name" value="2,3,4,5-TETRAHYDROPYRIDINE-2,6-DICARBOXYLATE N-ACETYLTRANSFERASE"/>
    <property type="match status" value="1"/>
</dbReference>
<dbReference type="PANTHER" id="PTHR43300">
    <property type="entry name" value="ACETYLTRANSFERASE"/>
    <property type="match status" value="1"/>
</dbReference>
<dbReference type="Pfam" id="PF08503">
    <property type="entry name" value="DapH_N"/>
    <property type="match status" value="1"/>
</dbReference>
<dbReference type="Pfam" id="PF00132">
    <property type="entry name" value="Hexapep"/>
    <property type="match status" value="1"/>
</dbReference>
<dbReference type="Pfam" id="PF14602">
    <property type="entry name" value="Hexapep_2"/>
    <property type="match status" value="1"/>
</dbReference>
<dbReference type="SUPFAM" id="SSF51161">
    <property type="entry name" value="Trimeric LpxA-like enzymes"/>
    <property type="match status" value="1"/>
</dbReference>
<dbReference type="PROSITE" id="PS00101">
    <property type="entry name" value="HEXAPEP_TRANSFERASES"/>
    <property type="match status" value="1"/>
</dbReference>
<feature type="chain" id="PRO_0000376731" description="2,3,4,5-tetrahydropyridine-2,6-dicarboxylate N-acetyltransferase">
    <location>
        <begin position="1"/>
        <end position="233"/>
    </location>
</feature>
<sequence length="233" mass="24925">MDAREIIEMIAKAKKKTPIVAYIKGDLAGIDFSSFKFFGDEKFGILFGEYEDFKKLLEEHKEKIEDYHLEVKARNSALPLADITKYKARIEPGAIIRDMVEIGEGAVIMMGAVINVGAVIGEGTMIDMNAVIGGRAIIGKKCHIGAGAVIAGVIEPPSAKPVVIEDEVVVGANAVILEGVTVGKGAVVAAGAVVTKDVPPYTVVAGVPARVIKQIDERTKEKTKIVDELRNLE</sequence>